<feature type="chain" id="PRO_0000389982" description="NADH-quinone oxidoreductase subunit K">
    <location>
        <begin position="1"/>
        <end position="101"/>
    </location>
</feature>
<feature type="transmembrane region" description="Helical" evidence="1">
    <location>
        <begin position="4"/>
        <end position="24"/>
    </location>
</feature>
<feature type="transmembrane region" description="Helical" evidence="1">
    <location>
        <begin position="29"/>
        <end position="49"/>
    </location>
</feature>
<feature type="transmembrane region" description="Helical" evidence="1">
    <location>
        <begin position="61"/>
        <end position="81"/>
    </location>
</feature>
<keyword id="KW-0997">Cell inner membrane</keyword>
<keyword id="KW-1003">Cell membrane</keyword>
<keyword id="KW-0472">Membrane</keyword>
<keyword id="KW-0520">NAD</keyword>
<keyword id="KW-0874">Quinone</keyword>
<keyword id="KW-1278">Translocase</keyword>
<keyword id="KW-0812">Transmembrane</keyword>
<keyword id="KW-1133">Transmembrane helix</keyword>
<keyword id="KW-0813">Transport</keyword>
<keyword id="KW-0830">Ubiquinone</keyword>
<comment type="function">
    <text evidence="1">NDH-1 shuttles electrons from NADH, via FMN and iron-sulfur (Fe-S) centers, to quinones in the respiratory chain. The immediate electron acceptor for the enzyme in this species is believed to be ubiquinone. Couples the redox reaction to proton translocation (for every two electrons transferred, four hydrogen ions are translocated across the cytoplasmic membrane), and thus conserves the redox energy in a proton gradient.</text>
</comment>
<comment type="catalytic activity">
    <reaction evidence="1">
        <text>a quinone + NADH + 5 H(+)(in) = a quinol + NAD(+) + 4 H(+)(out)</text>
        <dbReference type="Rhea" id="RHEA:57888"/>
        <dbReference type="ChEBI" id="CHEBI:15378"/>
        <dbReference type="ChEBI" id="CHEBI:24646"/>
        <dbReference type="ChEBI" id="CHEBI:57540"/>
        <dbReference type="ChEBI" id="CHEBI:57945"/>
        <dbReference type="ChEBI" id="CHEBI:132124"/>
    </reaction>
</comment>
<comment type="subunit">
    <text evidence="1">NDH-1 is composed of 14 different subunits. Subunits NuoA, H, J, K, L, M, N constitute the membrane sector of the complex.</text>
</comment>
<comment type="subcellular location">
    <subcellularLocation>
        <location evidence="1">Cell inner membrane</location>
        <topology evidence="1">Multi-pass membrane protein</topology>
    </subcellularLocation>
</comment>
<comment type="similarity">
    <text evidence="1">Belongs to the complex I subunit 4L family.</text>
</comment>
<name>NUOK_BURCM</name>
<sequence length="101" mass="11084">MLTLAHYLVLGAILFAIAIVGIFLNRRNIIIILMAIELMLLAVNTNFVAFSHYLGDVHGQIFVFFVLTVAAAEAAIGLAILVTLFRKLDTINVEDLDQLKG</sequence>
<gene>
    <name evidence="1" type="primary">nuoK</name>
    <name type="ordered locus">Bamb_2277</name>
</gene>
<evidence type="ECO:0000255" key="1">
    <source>
        <dbReference type="HAMAP-Rule" id="MF_01456"/>
    </source>
</evidence>
<proteinExistence type="inferred from homology"/>
<protein>
    <recommendedName>
        <fullName evidence="1">NADH-quinone oxidoreductase subunit K</fullName>
        <ecNumber evidence="1">7.1.1.-</ecNumber>
    </recommendedName>
    <alternativeName>
        <fullName evidence="1">NADH dehydrogenase I subunit K</fullName>
    </alternativeName>
    <alternativeName>
        <fullName evidence="1">NDH-1 subunit K</fullName>
    </alternativeName>
</protein>
<dbReference type="EC" id="7.1.1.-" evidence="1"/>
<dbReference type="EMBL" id="CP000440">
    <property type="protein sequence ID" value="ABI87833.1"/>
    <property type="molecule type" value="Genomic_DNA"/>
</dbReference>
<dbReference type="RefSeq" id="WP_004185739.1">
    <property type="nucleotide sequence ID" value="NZ_CP009798.1"/>
</dbReference>
<dbReference type="SMR" id="Q0BDE0"/>
<dbReference type="GeneID" id="98107315"/>
<dbReference type="KEGG" id="bam:Bamb_2277"/>
<dbReference type="PATRIC" id="fig|339670.21.peg.2650"/>
<dbReference type="eggNOG" id="COG0713">
    <property type="taxonomic scope" value="Bacteria"/>
</dbReference>
<dbReference type="Proteomes" id="UP000000662">
    <property type="component" value="Chromosome 1"/>
</dbReference>
<dbReference type="GO" id="GO:0030964">
    <property type="term" value="C:NADH dehydrogenase complex"/>
    <property type="evidence" value="ECO:0007669"/>
    <property type="project" value="TreeGrafter"/>
</dbReference>
<dbReference type="GO" id="GO:0005886">
    <property type="term" value="C:plasma membrane"/>
    <property type="evidence" value="ECO:0007669"/>
    <property type="project" value="UniProtKB-SubCell"/>
</dbReference>
<dbReference type="GO" id="GO:0050136">
    <property type="term" value="F:NADH:ubiquinone reductase (non-electrogenic) activity"/>
    <property type="evidence" value="ECO:0007669"/>
    <property type="project" value="UniProtKB-UniRule"/>
</dbReference>
<dbReference type="GO" id="GO:0048038">
    <property type="term" value="F:quinone binding"/>
    <property type="evidence" value="ECO:0007669"/>
    <property type="project" value="UniProtKB-KW"/>
</dbReference>
<dbReference type="GO" id="GO:0042773">
    <property type="term" value="P:ATP synthesis coupled electron transport"/>
    <property type="evidence" value="ECO:0007669"/>
    <property type="project" value="InterPro"/>
</dbReference>
<dbReference type="FunFam" id="1.10.287.3510:FF:000001">
    <property type="entry name" value="NADH-quinone oxidoreductase subunit K"/>
    <property type="match status" value="1"/>
</dbReference>
<dbReference type="Gene3D" id="1.10.287.3510">
    <property type="match status" value="1"/>
</dbReference>
<dbReference type="HAMAP" id="MF_01456">
    <property type="entry name" value="NDH1_NuoK"/>
    <property type="match status" value="1"/>
</dbReference>
<dbReference type="InterPro" id="IPR001133">
    <property type="entry name" value="NADH_UbQ_OxRdtase_chain4L/K"/>
</dbReference>
<dbReference type="InterPro" id="IPR039428">
    <property type="entry name" value="NUOK/Mnh_C1-like"/>
</dbReference>
<dbReference type="NCBIfam" id="NF004320">
    <property type="entry name" value="PRK05715.1-2"/>
    <property type="match status" value="1"/>
</dbReference>
<dbReference type="NCBIfam" id="NF004321">
    <property type="entry name" value="PRK05715.1-3"/>
    <property type="match status" value="1"/>
</dbReference>
<dbReference type="NCBIfam" id="NF004323">
    <property type="entry name" value="PRK05715.1-5"/>
    <property type="match status" value="1"/>
</dbReference>
<dbReference type="PANTHER" id="PTHR11434:SF21">
    <property type="entry name" value="NADH DEHYDROGENASE SUBUNIT 4L-RELATED"/>
    <property type="match status" value="1"/>
</dbReference>
<dbReference type="PANTHER" id="PTHR11434">
    <property type="entry name" value="NADH-UBIQUINONE OXIDOREDUCTASE SUBUNIT ND4L"/>
    <property type="match status" value="1"/>
</dbReference>
<dbReference type="Pfam" id="PF00420">
    <property type="entry name" value="Oxidored_q2"/>
    <property type="match status" value="1"/>
</dbReference>
<accession>Q0BDE0</accession>
<reference key="1">
    <citation type="submission" date="2006-08" db="EMBL/GenBank/DDBJ databases">
        <title>Complete sequence of chromosome 1 of Burkholderia cepacia AMMD.</title>
        <authorList>
            <person name="Copeland A."/>
            <person name="Lucas S."/>
            <person name="Lapidus A."/>
            <person name="Barry K."/>
            <person name="Detter J.C."/>
            <person name="Glavina del Rio T."/>
            <person name="Hammon N."/>
            <person name="Israni S."/>
            <person name="Pitluck S."/>
            <person name="Bruce D."/>
            <person name="Chain P."/>
            <person name="Malfatti S."/>
            <person name="Shin M."/>
            <person name="Vergez L."/>
            <person name="Schmutz J."/>
            <person name="Larimer F."/>
            <person name="Land M."/>
            <person name="Hauser L."/>
            <person name="Kyrpides N."/>
            <person name="Kim E."/>
            <person name="Parke J."/>
            <person name="Coenye T."/>
            <person name="Konstantinidis K."/>
            <person name="Ramette A."/>
            <person name="Tiedje J."/>
            <person name="Richardson P."/>
        </authorList>
    </citation>
    <scope>NUCLEOTIDE SEQUENCE [LARGE SCALE GENOMIC DNA]</scope>
    <source>
        <strain>ATCC BAA-244 / DSM 16087 / CCUG 44356 / LMG 19182 / AMMD</strain>
    </source>
</reference>
<organism>
    <name type="scientific">Burkholderia ambifaria (strain ATCC BAA-244 / DSM 16087 / CCUG 44356 / LMG 19182 / AMMD)</name>
    <name type="common">Burkholderia cepacia (strain AMMD)</name>
    <dbReference type="NCBI Taxonomy" id="339670"/>
    <lineage>
        <taxon>Bacteria</taxon>
        <taxon>Pseudomonadati</taxon>
        <taxon>Pseudomonadota</taxon>
        <taxon>Betaproteobacteria</taxon>
        <taxon>Burkholderiales</taxon>
        <taxon>Burkholderiaceae</taxon>
        <taxon>Burkholderia</taxon>
        <taxon>Burkholderia cepacia complex</taxon>
    </lineage>
</organism>